<proteinExistence type="inferred from homology"/>
<keyword id="KW-0067">ATP-binding</keyword>
<keyword id="KW-0418">Kinase</keyword>
<keyword id="KW-0547">Nucleotide-binding</keyword>
<keyword id="KW-0723">Serine/threonine-protein kinase</keyword>
<keyword id="KW-0808">Transferase</keyword>
<evidence type="ECO:0000255" key="1">
    <source>
        <dbReference type="HAMAP-Rule" id="MF_00638"/>
    </source>
</evidence>
<feature type="chain" id="PRO_0000203538" description="Serine-protein kinase RsbW">
    <location>
        <begin position="1"/>
        <end position="159"/>
    </location>
</feature>
<accession>P0C1V2</accession>
<accession>O08077</accession>
<accession>P0A0H8</accession>
<accession>P95843</accession>
<accession>Q6XZ92</accession>
<accession>Q6XZ96</accession>
<sequence length="159" mass="17931">MQSKEDFIEMRVPASAEYVSLIRLTLSGVFSRAGATYDDIEDAKIAVSEAVTNAVKHAYKENNNVGIINIYFEILEDKIKIVISDKGDSFDYETTKSKIGPYDKDENIDFLREGGLGLFLIESLMDEVTVYKEPGVTISMTKYIKKEQVRNNGERVEIS</sequence>
<protein>
    <recommendedName>
        <fullName evidence="1">Serine-protein kinase RsbW</fullName>
        <ecNumber evidence="1">2.7.11.1</ecNumber>
    </recommendedName>
    <alternativeName>
        <fullName evidence="1">Anti-sigma-B factor</fullName>
    </alternativeName>
    <alternativeName>
        <fullName evidence="1">Sigma-B negative effector RsbW</fullName>
    </alternativeName>
</protein>
<comment type="function">
    <text evidence="1">Negative regulator of sigma-B activity. Phosphorylates and inactivates its specific antagonist protein, RsbV. Upon phosphorylation of RsbV, RsbW is released and binds to sigma-B, thereby blocking its ability to form an RNA polymerase holoenzyme (E-sigma-B).</text>
</comment>
<comment type="catalytic activity">
    <reaction evidence="1">
        <text>L-seryl-[protein] + ATP = O-phospho-L-seryl-[protein] + ADP + H(+)</text>
        <dbReference type="Rhea" id="RHEA:17989"/>
        <dbReference type="Rhea" id="RHEA-COMP:9863"/>
        <dbReference type="Rhea" id="RHEA-COMP:11604"/>
        <dbReference type="ChEBI" id="CHEBI:15378"/>
        <dbReference type="ChEBI" id="CHEBI:29999"/>
        <dbReference type="ChEBI" id="CHEBI:30616"/>
        <dbReference type="ChEBI" id="CHEBI:83421"/>
        <dbReference type="ChEBI" id="CHEBI:456216"/>
        <dbReference type="EC" id="2.7.11.1"/>
    </reaction>
</comment>
<comment type="catalytic activity">
    <reaction evidence="1">
        <text>L-threonyl-[protein] + ATP = O-phospho-L-threonyl-[protein] + ADP + H(+)</text>
        <dbReference type="Rhea" id="RHEA:46608"/>
        <dbReference type="Rhea" id="RHEA-COMP:11060"/>
        <dbReference type="Rhea" id="RHEA-COMP:11605"/>
        <dbReference type="ChEBI" id="CHEBI:15378"/>
        <dbReference type="ChEBI" id="CHEBI:30013"/>
        <dbReference type="ChEBI" id="CHEBI:30616"/>
        <dbReference type="ChEBI" id="CHEBI:61977"/>
        <dbReference type="ChEBI" id="CHEBI:456216"/>
        <dbReference type="EC" id="2.7.11.1"/>
    </reaction>
</comment>
<comment type="similarity">
    <text evidence="1">Belongs to the anti-sigma-factor family.</text>
</comment>
<reference key="1">
    <citation type="submission" date="2002-12" db="EMBL/GenBank/DDBJ databases">
        <title>Role of sigB operon in Staphylococcus aureus biofilm formation.</title>
        <authorList>
            <person name="Cramton S.E."/>
            <person name="Doering G."/>
        </authorList>
    </citation>
    <scope>NUCLEOTIDE SEQUENCE [GENOMIC DNA]</scope>
    <source>
        <strain>ATCC 10832 / Wood 46</strain>
    </source>
</reference>
<gene>
    <name evidence="1" type="primary">rsbW</name>
</gene>
<dbReference type="EC" id="2.7.11.1" evidence="1"/>
<dbReference type="EMBL" id="AY197752">
    <property type="protein sequence ID" value="AAP42792.1"/>
    <property type="molecule type" value="Genomic_DNA"/>
</dbReference>
<dbReference type="SMR" id="P0C1V2"/>
<dbReference type="GO" id="GO:0005524">
    <property type="term" value="F:ATP binding"/>
    <property type="evidence" value="ECO:0007669"/>
    <property type="project" value="UniProtKB-KW"/>
</dbReference>
<dbReference type="GO" id="GO:0106310">
    <property type="term" value="F:protein serine kinase activity"/>
    <property type="evidence" value="ECO:0007669"/>
    <property type="project" value="RHEA"/>
</dbReference>
<dbReference type="GO" id="GO:0004674">
    <property type="term" value="F:protein serine/threonine kinase activity"/>
    <property type="evidence" value="ECO:0007669"/>
    <property type="project" value="UniProtKB-KW"/>
</dbReference>
<dbReference type="GO" id="GO:0016989">
    <property type="term" value="F:sigma factor antagonist activity"/>
    <property type="evidence" value="ECO:0007669"/>
    <property type="project" value="InterPro"/>
</dbReference>
<dbReference type="CDD" id="cd16936">
    <property type="entry name" value="HATPase_RsbW-like"/>
    <property type="match status" value="1"/>
</dbReference>
<dbReference type="Gene3D" id="3.30.565.10">
    <property type="entry name" value="Histidine kinase-like ATPase, C-terminal domain"/>
    <property type="match status" value="1"/>
</dbReference>
<dbReference type="HAMAP" id="MF_00638">
    <property type="entry name" value="Anti_sigma_B"/>
    <property type="match status" value="1"/>
</dbReference>
<dbReference type="InterPro" id="IPR050267">
    <property type="entry name" value="Anti-sigma-factor_SerPK"/>
</dbReference>
<dbReference type="InterPro" id="IPR036890">
    <property type="entry name" value="HATPase_C_sf"/>
</dbReference>
<dbReference type="InterPro" id="IPR010193">
    <property type="entry name" value="RsbW"/>
</dbReference>
<dbReference type="NCBIfam" id="NF003144">
    <property type="entry name" value="PRK04069.1"/>
    <property type="match status" value="1"/>
</dbReference>
<dbReference type="NCBIfam" id="TIGR01924">
    <property type="entry name" value="rsbW_low_gc"/>
    <property type="match status" value="1"/>
</dbReference>
<dbReference type="PANTHER" id="PTHR35526">
    <property type="entry name" value="ANTI-SIGMA-F FACTOR RSBW-RELATED"/>
    <property type="match status" value="1"/>
</dbReference>
<dbReference type="PANTHER" id="PTHR35526:SF9">
    <property type="entry name" value="SERINE-PROTEIN KINASE RSBW"/>
    <property type="match status" value="1"/>
</dbReference>
<dbReference type="Pfam" id="PF13581">
    <property type="entry name" value="HATPase_c_2"/>
    <property type="match status" value="1"/>
</dbReference>
<dbReference type="SUPFAM" id="SSF55874">
    <property type="entry name" value="ATPase domain of HSP90 chaperone/DNA topoisomerase II/histidine kinase"/>
    <property type="match status" value="1"/>
</dbReference>
<organism>
    <name type="scientific">Staphylococcus aureus</name>
    <dbReference type="NCBI Taxonomy" id="1280"/>
    <lineage>
        <taxon>Bacteria</taxon>
        <taxon>Bacillati</taxon>
        <taxon>Bacillota</taxon>
        <taxon>Bacilli</taxon>
        <taxon>Bacillales</taxon>
        <taxon>Staphylococcaceae</taxon>
        <taxon>Staphylococcus</taxon>
    </lineage>
</organism>
<name>RSBW_STAAU</name>